<feature type="chain" id="PRO_1000059246" description="Phenylalanine--tRNA ligase alpha subunit">
    <location>
        <begin position="1"/>
        <end position="327"/>
    </location>
</feature>
<feature type="binding site" evidence="1">
    <location>
        <position position="252"/>
    </location>
    <ligand>
        <name>Mg(2+)</name>
        <dbReference type="ChEBI" id="CHEBI:18420"/>
        <note>shared with beta subunit</note>
    </ligand>
</feature>
<name>SYFA_SERP5</name>
<sequence length="327" mass="36918">MPHLAELVANAKAAVEDAQDVAALDLVRVEYLGKKGHFTLQMQSLRDVPAEDRPAAGAVINQAKQAVQEALNARKNALESAALNERLAAETIDVSLPGRRMENGGLHPVTRTIDRIEAFFGELGFSVETGPEIEDDYHNFDALNIPGHHPARADHDTFWFDATRLLRTQTSGVQIRTMKEQQPPIRIIAPGRVYRNDYDQTHTPMFHQMEGLIVDKDISFTNLKGTLHDFLNNFFEEDLQVRFRPSYFPFTEPSAEVDVMGKNGKWLEVLGCGMVHPNVLRNVGIDPEVYSGFAFGMGMERLTMLRYGVTDLRAFFENDLRFLKQFK</sequence>
<reference key="1">
    <citation type="submission" date="2007-09" db="EMBL/GenBank/DDBJ databases">
        <title>Complete sequence of chromosome of Serratia proteamaculans 568.</title>
        <authorList>
            <consortium name="US DOE Joint Genome Institute"/>
            <person name="Copeland A."/>
            <person name="Lucas S."/>
            <person name="Lapidus A."/>
            <person name="Barry K."/>
            <person name="Glavina del Rio T."/>
            <person name="Dalin E."/>
            <person name="Tice H."/>
            <person name="Pitluck S."/>
            <person name="Chain P."/>
            <person name="Malfatti S."/>
            <person name="Shin M."/>
            <person name="Vergez L."/>
            <person name="Schmutz J."/>
            <person name="Larimer F."/>
            <person name="Land M."/>
            <person name="Hauser L."/>
            <person name="Kyrpides N."/>
            <person name="Kim E."/>
            <person name="Taghavi S."/>
            <person name="Newman L."/>
            <person name="Vangronsveld J."/>
            <person name="van der Lelie D."/>
            <person name="Richardson P."/>
        </authorList>
    </citation>
    <scope>NUCLEOTIDE SEQUENCE [LARGE SCALE GENOMIC DNA]</scope>
    <source>
        <strain>568</strain>
    </source>
</reference>
<comment type="catalytic activity">
    <reaction evidence="1">
        <text>tRNA(Phe) + L-phenylalanine + ATP = L-phenylalanyl-tRNA(Phe) + AMP + diphosphate + H(+)</text>
        <dbReference type="Rhea" id="RHEA:19413"/>
        <dbReference type="Rhea" id="RHEA-COMP:9668"/>
        <dbReference type="Rhea" id="RHEA-COMP:9699"/>
        <dbReference type="ChEBI" id="CHEBI:15378"/>
        <dbReference type="ChEBI" id="CHEBI:30616"/>
        <dbReference type="ChEBI" id="CHEBI:33019"/>
        <dbReference type="ChEBI" id="CHEBI:58095"/>
        <dbReference type="ChEBI" id="CHEBI:78442"/>
        <dbReference type="ChEBI" id="CHEBI:78531"/>
        <dbReference type="ChEBI" id="CHEBI:456215"/>
        <dbReference type="EC" id="6.1.1.20"/>
    </reaction>
</comment>
<comment type="cofactor">
    <cofactor evidence="1">
        <name>Mg(2+)</name>
        <dbReference type="ChEBI" id="CHEBI:18420"/>
    </cofactor>
    <text evidence="1">Binds 2 magnesium ions per tetramer.</text>
</comment>
<comment type="subunit">
    <text evidence="1">Tetramer of two alpha and two beta subunits.</text>
</comment>
<comment type="subcellular location">
    <subcellularLocation>
        <location evidence="1">Cytoplasm</location>
    </subcellularLocation>
</comment>
<comment type="similarity">
    <text evidence="1">Belongs to the class-II aminoacyl-tRNA synthetase family. Phe-tRNA synthetase alpha subunit type 1 subfamily.</text>
</comment>
<protein>
    <recommendedName>
        <fullName evidence="1">Phenylalanine--tRNA ligase alpha subunit</fullName>
        <ecNumber evidence="1">6.1.1.20</ecNumber>
    </recommendedName>
    <alternativeName>
        <fullName evidence="1">Phenylalanyl-tRNA synthetase alpha subunit</fullName>
        <shortName evidence="1">PheRS</shortName>
    </alternativeName>
</protein>
<organism>
    <name type="scientific">Serratia proteamaculans (strain 568)</name>
    <dbReference type="NCBI Taxonomy" id="399741"/>
    <lineage>
        <taxon>Bacteria</taxon>
        <taxon>Pseudomonadati</taxon>
        <taxon>Pseudomonadota</taxon>
        <taxon>Gammaproteobacteria</taxon>
        <taxon>Enterobacterales</taxon>
        <taxon>Yersiniaceae</taxon>
        <taxon>Serratia</taxon>
    </lineage>
</organism>
<dbReference type="EC" id="6.1.1.20" evidence="1"/>
<dbReference type="EMBL" id="CP000826">
    <property type="protein sequence ID" value="ABV41249.1"/>
    <property type="molecule type" value="Genomic_DNA"/>
</dbReference>
<dbReference type="SMR" id="A8GDQ9"/>
<dbReference type="STRING" id="399741.Spro_2148"/>
<dbReference type="KEGG" id="spe:Spro_2148"/>
<dbReference type="eggNOG" id="COG0016">
    <property type="taxonomic scope" value="Bacteria"/>
</dbReference>
<dbReference type="HOGENOM" id="CLU_025086_0_1_6"/>
<dbReference type="OrthoDB" id="9800719at2"/>
<dbReference type="GO" id="GO:0005737">
    <property type="term" value="C:cytoplasm"/>
    <property type="evidence" value="ECO:0007669"/>
    <property type="project" value="UniProtKB-SubCell"/>
</dbReference>
<dbReference type="GO" id="GO:0005524">
    <property type="term" value="F:ATP binding"/>
    <property type="evidence" value="ECO:0007669"/>
    <property type="project" value="UniProtKB-UniRule"/>
</dbReference>
<dbReference type="GO" id="GO:0000287">
    <property type="term" value="F:magnesium ion binding"/>
    <property type="evidence" value="ECO:0007669"/>
    <property type="project" value="UniProtKB-UniRule"/>
</dbReference>
<dbReference type="GO" id="GO:0004826">
    <property type="term" value="F:phenylalanine-tRNA ligase activity"/>
    <property type="evidence" value="ECO:0007669"/>
    <property type="project" value="UniProtKB-UniRule"/>
</dbReference>
<dbReference type="GO" id="GO:0000049">
    <property type="term" value="F:tRNA binding"/>
    <property type="evidence" value="ECO:0007669"/>
    <property type="project" value="InterPro"/>
</dbReference>
<dbReference type="GO" id="GO:0006432">
    <property type="term" value="P:phenylalanyl-tRNA aminoacylation"/>
    <property type="evidence" value="ECO:0007669"/>
    <property type="project" value="UniProtKB-UniRule"/>
</dbReference>
<dbReference type="CDD" id="cd00496">
    <property type="entry name" value="PheRS_alpha_core"/>
    <property type="match status" value="1"/>
</dbReference>
<dbReference type="FunFam" id="3.30.930.10:FF:000003">
    <property type="entry name" value="Phenylalanine--tRNA ligase alpha subunit"/>
    <property type="match status" value="1"/>
</dbReference>
<dbReference type="Gene3D" id="3.30.930.10">
    <property type="entry name" value="Bira Bifunctional Protein, Domain 2"/>
    <property type="match status" value="1"/>
</dbReference>
<dbReference type="HAMAP" id="MF_00281">
    <property type="entry name" value="Phe_tRNA_synth_alpha1"/>
    <property type="match status" value="1"/>
</dbReference>
<dbReference type="InterPro" id="IPR006195">
    <property type="entry name" value="aa-tRNA-synth_II"/>
</dbReference>
<dbReference type="InterPro" id="IPR045864">
    <property type="entry name" value="aa-tRNA-synth_II/BPL/LPL"/>
</dbReference>
<dbReference type="InterPro" id="IPR004529">
    <property type="entry name" value="Phe-tRNA-synth_IIc_asu"/>
</dbReference>
<dbReference type="InterPro" id="IPR004188">
    <property type="entry name" value="Phe-tRNA_ligase_II_N"/>
</dbReference>
<dbReference type="InterPro" id="IPR022911">
    <property type="entry name" value="Phe_tRNA_ligase_alpha1_bac"/>
</dbReference>
<dbReference type="InterPro" id="IPR002319">
    <property type="entry name" value="Phenylalanyl-tRNA_Synthase"/>
</dbReference>
<dbReference type="InterPro" id="IPR010978">
    <property type="entry name" value="tRNA-bd_arm"/>
</dbReference>
<dbReference type="NCBIfam" id="TIGR00468">
    <property type="entry name" value="pheS"/>
    <property type="match status" value="1"/>
</dbReference>
<dbReference type="PANTHER" id="PTHR11538:SF41">
    <property type="entry name" value="PHENYLALANINE--TRNA LIGASE, MITOCHONDRIAL"/>
    <property type="match status" value="1"/>
</dbReference>
<dbReference type="PANTHER" id="PTHR11538">
    <property type="entry name" value="PHENYLALANYL-TRNA SYNTHETASE"/>
    <property type="match status" value="1"/>
</dbReference>
<dbReference type="Pfam" id="PF02912">
    <property type="entry name" value="Phe_tRNA-synt_N"/>
    <property type="match status" value="1"/>
</dbReference>
<dbReference type="Pfam" id="PF01409">
    <property type="entry name" value="tRNA-synt_2d"/>
    <property type="match status" value="1"/>
</dbReference>
<dbReference type="SUPFAM" id="SSF55681">
    <property type="entry name" value="Class II aaRS and biotin synthetases"/>
    <property type="match status" value="1"/>
</dbReference>
<dbReference type="SUPFAM" id="SSF46589">
    <property type="entry name" value="tRNA-binding arm"/>
    <property type="match status" value="1"/>
</dbReference>
<dbReference type="PROSITE" id="PS50862">
    <property type="entry name" value="AA_TRNA_LIGASE_II"/>
    <property type="match status" value="1"/>
</dbReference>
<proteinExistence type="inferred from homology"/>
<gene>
    <name evidence="1" type="primary">pheS</name>
    <name type="ordered locus">Spro_2148</name>
</gene>
<keyword id="KW-0030">Aminoacyl-tRNA synthetase</keyword>
<keyword id="KW-0067">ATP-binding</keyword>
<keyword id="KW-0963">Cytoplasm</keyword>
<keyword id="KW-0436">Ligase</keyword>
<keyword id="KW-0460">Magnesium</keyword>
<keyword id="KW-0479">Metal-binding</keyword>
<keyword id="KW-0547">Nucleotide-binding</keyword>
<keyword id="KW-0648">Protein biosynthesis</keyword>
<evidence type="ECO:0000255" key="1">
    <source>
        <dbReference type="HAMAP-Rule" id="MF_00281"/>
    </source>
</evidence>
<accession>A8GDQ9</accession>